<feature type="chain" id="PRO_0000331348" description="Heme sensor protein HssS">
    <location>
        <begin position="1"/>
        <end position="457"/>
    </location>
</feature>
<feature type="transmembrane region" description="Helical" evidence="2">
    <location>
        <begin position="9"/>
        <end position="29"/>
    </location>
</feature>
<feature type="transmembrane region" description="Helical" evidence="2">
    <location>
        <begin position="164"/>
        <end position="184"/>
    </location>
</feature>
<feature type="domain" description="HAMP" evidence="3">
    <location>
        <begin position="186"/>
        <end position="238"/>
    </location>
</feature>
<feature type="domain" description="Histidine kinase" evidence="4">
    <location>
        <begin position="246"/>
        <end position="456"/>
    </location>
</feature>
<feature type="modified residue" description="Phosphohistidine; by autocatalysis" evidence="4 5">
    <location>
        <position position="249"/>
    </location>
</feature>
<feature type="mutagenesis site" description="Abolishes autophosphorylation." evidence="5">
    <original>H</original>
    <variation>A</variation>
    <location>
        <position position="249"/>
    </location>
</feature>
<protein>
    <recommendedName>
        <fullName>Heme sensor protein HssS</fullName>
        <ecNumber>2.7.13.3</ecNumber>
    </recommendedName>
</protein>
<dbReference type="EC" id="2.7.13.3"/>
<dbReference type="EMBL" id="AP009351">
    <property type="protein sequence ID" value="BAF68536.1"/>
    <property type="molecule type" value="Genomic_DNA"/>
</dbReference>
<dbReference type="RefSeq" id="WP_000477329.1">
    <property type="nucleotide sequence ID" value="NZ_JBBIAE010000004.1"/>
</dbReference>
<dbReference type="SMR" id="A6QJK4"/>
<dbReference type="iPTMnet" id="A6QJK4"/>
<dbReference type="KEGG" id="sae:NWMN_2264"/>
<dbReference type="HOGENOM" id="CLU_000445_89_6_9"/>
<dbReference type="Proteomes" id="UP000006386">
    <property type="component" value="Chromosome"/>
</dbReference>
<dbReference type="GO" id="GO:0005886">
    <property type="term" value="C:plasma membrane"/>
    <property type="evidence" value="ECO:0007669"/>
    <property type="project" value="UniProtKB-SubCell"/>
</dbReference>
<dbReference type="GO" id="GO:0005524">
    <property type="term" value="F:ATP binding"/>
    <property type="evidence" value="ECO:0007669"/>
    <property type="project" value="UniProtKB-KW"/>
</dbReference>
<dbReference type="GO" id="GO:0000155">
    <property type="term" value="F:phosphorelay sensor kinase activity"/>
    <property type="evidence" value="ECO:0007669"/>
    <property type="project" value="InterPro"/>
</dbReference>
<dbReference type="CDD" id="cd06225">
    <property type="entry name" value="HAMP"/>
    <property type="match status" value="1"/>
</dbReference>
<dbReference type="CDD" id="cd00082">
    <property type="entry name" value="HisKA"/>
    <property type="match status" value="1"/>
</dbReference>
<dbReference type="FunFam" id="3.30.565.10:FF:000006">
    <property type="entry name" value="Sensor histidine kinase WalK"/>
    <property type="match status" value="1"/>
</dbReference>
<dbReference type="Gene3D" id="1.10.287.130">
    <property type="match status" value="1"/>
</dbReference>
<dbReference type="Gene3D" id="6.10.340.10">
    <property type="match status" value="1"/>
</dbReference>
<dbReference type="Gene3D" id="3.30.565.10">
    <property type="entry name" value="Histidine kinase-like ATPase, C-terminal domain"/>
    <property type="match status" value="1"/>
</dbReference>
<dbReference type="InterPro" id="IPR050398">
    <property type="entry name" value="Bact_Sensor_His_Kinase"/>
</dbReference>
<dbReference type="InterPro" id="IPR003660">
    <property type="entry name" value="HAMP_dom"/>
</dbReference>
<dbReference type="InterPro" id="IPR036890">
    <property type="entry name" value="HATPase_C_sf"/>
</dbReference>
<dbReference type="InterPro" id="IPR005467">
    <property type="entry name" value="His_kinase_dom"/>
</dbReference>
<dbReference type="InterPro" id="IPR003661">
    <property type="entry name" value="HisK_dim/P_dom"/>
</dbReference>
<dbReference type="InterPro" id="IPR036097">
    <property type="entry name" value="HisK_dim/P_sf"/>
</dbReference>
<dbReference type="InterPro" id="IPR004358">
    <property type="entry name" value="Sig_transdc_His_kin-like_C"/>
</dbReference>
<dbReference type="PANTHER" id="PTHR45528:SF11">
    <property type="entry name" value="HISTIDINE KINASE"/>
    <property type="match status" value="1"/>
</dbReference>
<dbReference type="PANTHER" id="PTHR45528">
    <property type="entry name" value="SENSOR HISTIDINE KINASE CPXA"/>
    <property type="match status" value="1"/>
</dbReference>
<dbReference type="Pfam" id="PF00672">
    <property type="entry name" value="HAMP"/>
    <property type="match status" value="1"/>
</dbReference>
<dbReference type="Pfam" id="PF02518">
    <property type="entry name" value="HATPase_c"/>
    <property type="match status" value="1"/>
</dbReference>
<dbReference type="Pfam" id="PF00512">
    <property type="entry name" value="HisKA"/>
    <property type="match status" value="1"/>
</dbReference>
<dbReference type="PRINTS" id="PR00344">
    <property type="entry name" value="BCTRLSENSOR"/>
</dbReference>
<dbReference type="SMART" id="SM00304">
    <property type="entry name" value="HAMP"/>
    <property type="match status" value="1"/>
</dbReference>
<dbReference type="SMART" id="SM00387">
    <property type="entry name" value="HATPase_c"/>
    <property type="match status" value="1"/>
</dbReference>
<dbReference type="SMART" id="SM00388">
    <property type="entry name" value="HisKA"/>
    <property type="match status" value="1"/>
</dbReference>
<dbReference type="SUPFAM" id="SSF55874">
    <property type="entry name" value="ATPase domain of HSP90 chaperone/DNA topoisomerase II/histidine kinase"/>
    <property type="match status" value="1"/>
</dbReference>
<dbReference type="SUPFAM" id="SSF158472">
    <property type="entry name" value="HAMP domain-like"/>
    <property type="match status" value="1"/>
</dbReference>
<dbReference type="SUPFAM" id="SSF47384">
    <property type="entry name" value="Homodimeric domain of signal transducing histidine kinase"/>
    <property type="match status" value="1"/>
</dbReference>
<dbReference type="PROSITE" id="PS50885">
    <property type="entry name" value="HAMP"/>
    <property type="match status" value="1"/>
</dbReference>
<dbReference type="PROSITE" id="PS50109">
    <property type="entry name" value="HIS_KIN"/>
    <property type="match status" value="1"/>
</dbReference>
<name>HSSS_STAAE</name>
<accession>A6QJK4</accession>
<evidence type="ECO:0000250" key="1"/>
<evidence type="ECO:0000255" key="2"/>
<evidence type="ECO:0000255" key="3">
    <source>
        <dbReference type="PROSITE-ProRule" id="PRU00102"/>
    </source>
</evidence>
<evidence type="ECO:0000255" key="4">
    <source>
        <dbReference type="PROSITE-ProRule" id="PRU00107"/>
    </source>
</evidence>
<evidence type="ECO:0000269" key="5">
    <source>
    </source>
</evidence>
<evidence type="ECO:0000269" key="6">
    <source>
    </source>
</evidence>
<reference key="1">
    <citation type="journal article" date="2008" name="J. Bacteriol.">
        <title>Genome sequence of Staphylococcus aureus strain Newman and comparative analysis of staphylococcal genomes: polymorphism and evolution of two major pathogenicity islands.</title>
        <authorList>
            <person name="Baba T."/>
            <person name="Bae T."/>
            <person name="Schneewind O."/>
            <person name="Takeuchi F."/>
            <person name="Hiramatsu K."/>
        </authorList>
    </citation>
    <scope>NUCLEOTIDE SEQUENCE [LARGE SCALE GENOMIC DNA]</scope>
    <source>
        <strain>Newman</strain>
    </source>
</reference>
<reference key="2">
    <citation type="journal article" date="2007" name="Cell Host Microbe">
        <title>A Staphylococcus aureus regulatory system that responds to host heme and modulates virulence.</title>
        <authorList>
            <person name="Torres V.J."/>
            <person name="Stauff D.L."/>
            <person name="Pishchany G."/>
            <person name="Bezbradica J.S."/>
            <person name="Gordy L.E."/>
            <person name="Iturregui J."/>
            <person name="Anderson K.L."/>
            <person name="Dunman P.M."/>
            <person name="Joyce S."/>
            <person name="Skaar E.P."/>
        </authorList>
    </citation>
    <scope>FUNCTION IN REGULATION OF HRTAB EXPRESSION</scope>
    <scope>MODULATION OF VIRULENCE</scope>
</reference>
<reference key="3">
    <citation type="journal article" date="2007" name="J. Biol. Chem.">
        <title>Signaling and DNA-binding activities of the Staphylococcus aureus HssR-HssS two-component system required for heme sensing.</title>
        <authorList>
            <person name="Stauff D.L."/>
            <person name="Torres V.J."/>
            <person name="Skaar E.P."/>
        </authorList>
    </citation>
    <scope>FUNCTION</scope>
    <scope>REGULATION</scope>
    <scope>PHOSPHORYLATION AT HIS-249</scope>
    <scope>MUTAGENESIS OF HIS-249</scope>
</reference>
<comment type="function">
    <text evidence="5 6">Member of the two-component regulatory system HssS/HssR involved in intracellular heme homeostasis and tempering of staphylococcal virulence. HssS functions as a heme sensor histidine kinase which is autophosphorylated at a histidine residue and transfers its phosphate group to an aspartate residue of HssR. HssR/HssS activates the expression of hrtAB, an efflux pump, in response to extracellular heme, hemin, hemoglobin or blood.</text>
</comment>
<comment type="catalytic activity">
    <reaction>
        <text>ATP + protein L-histidine = ADP + protein N-phospho-L-histidine.</text>
        <dbReference type="EC" id="2.7.13.3"/>
    </reaction>
</comment>
<comment type="subcellular location">
    <subcellularLocation>
        <location evidence="1">Cell membrane</location>
        <topology evidence="1">Multi-pass membrane protein</topology>
    </subcellularLocation>
</comment>
<comment type="PTM">
    <text evidence="5">Autophosphorylated.</text>
</comment>
<gene>
    <name type="primary">hssS</name>
    <name type="ordered locus">NWMN_2264</name>
</gene>
<organism>
    <name type="scientific">Staphylococcus aureus (strain Newman)</name>
    <dbReference type="NCBI Taxonomy" id="426430"/>
    <lineage>
        <taxon>Bacteria</taxon>
        <taxon>Bacillati</taxon>
        <taxon>Bacillota</taxon>
        <taxon>Bacilli</taxon>
        <taxon>Bacillales</taxon>
        <taxon>Staphylococcaceae</taxon>
        <taxon>Staphylococcus</taxon>
    </lineage>
</organism>
<proteinExistence type="evidence at protein level"/>
<keyword id="KW-0067">ATP-binding</keyword>
<keyword id="KW-1003">Cell membrane</keyword>
<keyword id="KW-0418">Kinase</keyword>
<keyword id="KW-0472">Membrane</keyword>
<keyword id="KW-0547">Nucleotide-binding</keyword>
<keyword id="KW-0597">Phosphoprotein</keyword>
<keyword id="KW-0808">Transferase</keyword>
<keyword id="KW-0812">Transmembrane</keyword>
<keyword id="KW-1133">Transmembrane helix</keyword>
<keyword id="KW-0902">Two-component regulatory system</keyword>
<keyword id="KW-0843">Virulence</keyword>
<sequence>MFKTLYARIAIYSITVILFSALISFVLTNVYYHYNLKASNDAKIMKTLKEARQYEQSAKPTHIQQYFKHLGQMNYQIMTIDQKGHKTFYGEPFREDTLSQNAINNVLNNQDYHGIKDKPFALFVTGFFDNVTDNTVGINFKTKDGSIAVFMRPDIGETFSEFRTFLAVLLMLLLFISISLVIASTYSIIRPVKKLKLATERLIDGDFETPIKQTRKDEIGTLQYHFNKMRESLGQVDQMRQHFVQNVSHEIKTPLTHIHHLLSELQQTSDKTLRQQYINDIYTITTQLSGLTTELLLLSELDNHQHLLFDDKIQVNQLIKDIIRHEQFAADEKSLIILADLESINFLGNQRLLHQALSNLLINAIKYTDVGGAIDIALQHSHNNIIFTISNDGSPISPQAEARLFERFYKVSKHDNSNGLGLAITKSIIELHHGTIQFTQSNEYVTTFTITLPNNSL</sequence>